<keyword id="KW-0627">Porphyrin biosynthesis</keyword>
<keyword id="KW-1185">Reference proteome</keyword>
<keyword id="KW-0808">Transferase</keyword>
<feature type="chain" id="PRO_0000142939" description="Porphobilinogen deaminase">
    <location>
        <begin position="1"/>
        <end position="300"/>
    </location>
</feature>
<feature type="modified residue" description="S-(dipyrrolylmethanemethyl)cysteine" evidence="1">
    <location>
        <position position="239"/>
    </location>
</feature>
<proteinExistence type="inferred from homology"/>
<dbReference type="EC" id="2.5.1.61" evidence="1"/>
<dbReference type="EMBL" id="AJ749949">
    <property type="protein sequence ID" value="CAG44892.1"/>
    <property type="molecule type" value="Genomic_DNA"/>
</dbReference>
<dbReference type="RefSeq" id="WP_003021732.1">
    <property type="nucleotide sequence ID" value="NC_006570.2"/>
</dbReference>
<dbReference type="RefSeq" id="YP_169311.1">
    <property type="nucleotide sequence ID" value="NC_006570.2"/>
</dbReference>
<dbReference type="SMR" id="Q5NI31"/>
<dbReference type="IntAct" id="Q5NI31">
    <property type="interactions" value="1"/>
</dbReference>
<dbReference type="STRING" id="177416.FTT_0259"/>
<dbReference type="DNASU" id="3192416"/>
<dbReference type="EnsemblBacteria" id="CAG44892">
    <property type="protein sequence ID" value="CAG44892"/>
    <property type="gene ID" value="FTT_0259"/>
</dbReference>
<dbReference type="KEGG" id="ftu:FTT_0259"/>
<dbReference type="eggNOG" id="COG0181">
    <property type="taxonomic scope" value="Bacteria"/>
</dbReference>
<dbReference type="OrthoDB" id="9810298at2"/>
<dbReference type="UniPathway" id="UPA00251">
    <property type="reaction ID" value="UER00319"/>
</dbReference>
<dbReference type="Proteomes" id="UP000001174">
    <property type="component" value="Chromosome"/>
</dbReference>
<dbReference type="GO" id="GO:0005737">
    <property type="term" value="C:cytoplasm"/>
    <property type="evidence" value="ECO:0007669"/>
    <property type="project" value="TreeGrafter"/>
</dbReference>
<dbReference type="GO" id="GO:0004418">
    <property type="term" value="F:hydroxymethylbilane synthase activity"/>
    <property type="evidence" value="ECO:0007669"/>
    <property type="project" value="UniProtKB-UniRule"/>
</dbReference>
<dbReference type="GO" id="GO:0006782">
    <property type="term" value="P:protoporphyrinogen IX biosynthetic process"/>
    <property type="evidence" value="ECO:0007669"/>
    <property type="project" value="UniProtKB-UniRule"/>
</dbReference>
<dbReference type="CDD" id="cd13646">
    <property type="entry name" value="PBP2_EcHMBS_like"/>
    <property type="match status" value="1"/>
</dbReference>
<dbReference type="FunFam" id="3.40.190.10:FF:000004">
    <property type="entry name" value="Porphobilinogen deaminase"/>
    <property type="match status" value="1"/>
</dbReference>
<dbReference type="FunFam" id="3.40.190.10:FF:000005">
    <property type="entry name" value="Porphobilinogen deaminase"/>
    <property type="match status" value="1"/>
</dbReference>
<dbReference type="Gene3D" id="3.40.190.10">
    <property type="entry name" value="Periplasmic binding protein-like II"/>
    <property type="match status" value="2"/>
</dbReference>
<dbReference type="Gene3D" id="3.30.160.40">
    <property type="entry name" value="Porphobilinogen deaminase, C-terminal domain"/>
    <property type="match status" value="1"/>
</dbReference>
<dbReference type="HAMAP" id="MF_00260">
    <property type="entry name" value="Porphobil_deam"/>
    <property type="match status" value="1"/>
</dbReference>
<dbReference type="InterPro" id="IPR000860">
    <property type="entry name" value="HemC"/>
</dbReference>
<dbReference type="InterPro" id="IPR022419">
    <property type="entry name" value="Porphobilin_deaminase_cofac_BS"/>
</dbReference>
<dbReference type="InterPro" id="IPR022417">
    <property type="entry name" value="Porphobilin_deaminase_N"/>
</dbReference>
<dbReference type="InterPro" id="IPR022418">
    <property type="entry name" value="Porphobilinogen_deaminase_C"/>
</dbReference>
<dbReference type="InterPro" id="IPR036803">
    <property type="entry name" value="Porphobilinogen_deaminase_C_sf"/>
</dbReference>
<dbReference type="NCBIfam" id="TIGR00212">
    <property type="entry name" value="hemC"/>
    <property type="match status" value="1"/>
</dbReference>
<dbReference type="PANTHER" id="PTHR11557">
    <property type="entry name" value="PORPHOBILINOGEN DEAMINASE"/>
    <property type="match status" value="1"/>
</dbReference>
<dbReference type="PANTHER" id="PTHR11557:SF0">
    <property type="entry name" value="PORPHOBILINOGEN DEAMINASE"/>
    <property type="match status" value="1"/>
</dbReference>
<dbReference type="Pfam" id="PF01379">
    <property type="entry name" value="Porphobil_deam"/>
    <property type="match status" value="1"/>
</dbReference>
<dbReference type="Pfam" id="PF03900">
    <property type="entry name" value="Porphobil_deamC"/>
    <property type="match status" value="1"/>
</dbReference>
<dbReference type="PIRSF" id="PIRSF001438">
    <property type="entry name" value="4pyrrol_synth_OHMeBilane_synth"/>
    <property type="match status" value="1"/>
</dbReference>
<dbReference type="PRINTS" id="PR00151">
    <property type="entry name" value="PORPHBDMNASE"/>
</dbReference>
<dbReference type="SUPFAM" id="SSF53850">
    <property type="entry name" value="Periplasmic binding protein-like II"/>
    <property type="match status" value="1"/>
</dbReference>
<dbReference type="SUPFAM" id="SSF54782">
    <property type="entry name" value="Porphobilinogen deaminase (hydroxymethylbilane synthase), C-terminal domain"/>
    <property type="match status" value="1"/>
</dbReference>
<dbReference type="PROSITE" id="PS00533">
    <property type="entry name" value="PORPHOBILINOGEN_DEAM"/>
    <property type="match status" value="1"/>
</dbReference>
<gene>
    <name evidence="1" type="primary">hemC</name>
    <name type="ordered locus">FTT_0259</name>
</gene>
<name>HEM3_FRATT</name>
<comment type="function">
    <text evidence="1">Tetrapolymerization of the monopyrrole PBG into the hydroxymethylbilane pre-uroporphyrinogen in several discrete steps.</text>
</comment>
<comment type="catalytic activity">
    <reaction evidence="1">
        <text>4 porphobilinogen + H2O = hydroxymethylbilane + 4 NH4(+)</text>
        <dbReference type="Rhea" id="RHEA:13185"/>
        <dbReference type="ChEBI" id="CHEBI:15377"/>
        <dbReference type="ChEBI" id="CHEBI:28938"/>
        <dbReference type="ChEBI" id="CHEBI:57845"/>
        <dbReference type="ChEBI" id="CHEBI:58126"/>
        <dbReference type="EC" id="2.5.1.61"/>
    </reaction>
</comment>
<comment type="cofactor">
    <cofactor evidence="1">
        <name>dipyrromethane</name>
        <dbReference type="ChEBI" id="CHEBI:60342"/>
    </cofactor>
    <text evidence="1">Binds 1 dipyrromethane group covalently.</text>
</comment>
<comment type="pathway">
    <text evidence="1">Porphyrin-containing compound metabolism; protoporphyrin-IX biosynthesis; coproporphyrinogen-III from 5-aminolevulinate: step 2/4.</text>
</comment>
<comment type="subunit">
    <text evidence="1">Monomer.</text>
</comment>
<comment type="miscellaneous">
    <text evidence="1">The porphobilinogen subunits are added to the dipyrromethane group.</text>
</comment>
<comment type="similarity">
    <text evidence="1">Belongs to the HMBS family.</text>
</comment>
<accession>Q5NI31</accession>
<reference key="1">
    <citation type="journal article" date="2005" name="Nat. Genet.">
        <title>The complete genome sequence of Francisella tularensis, the causative agent of tularemia.</title>
        <authorList>
            <person name="Larsson P."/>
            <person name="Oyston P.C.F."/>
            <person name="Chain P."/>
            <person name="Chu M.C."/>
            <person name="Duffield M."/>
            <person name="Fuxelius H.-H."/>
            <person name="Garcia E."/>
            <person name="Haelltorp G."/>
            <person name="Johansson D."/>
            <person name="Isherwood K.E."/>
            <person name="Karp P.D."/>
            <person name="Larsson E."/>
            <person name="Liu Y."/>
            <person name="Michell S."/>
            <person name="Prior J."/>
            <person name="Prior R."/>
            <person name="Malfatti S."/>
            <person name="Sjoestedt A."/>
            <person name="Svensson K."/>
            <person name="Thompson N."/>
            <person name="Vergez L."/>
            <person name="Wagg J.K."/>
            <person name="Wren B.W."/>
            <person name="Lindler L.E."/>
            <person name="Andersson S.G.E."/>
            <person name="Forsman M."/>
            <person name="Titball R.W."/>
        </authorList>
    </citation>
    <scope>NUCLEOTIDE SEQUENCE [LARGE SCALE GENOMIC DNA]</scope>
    <source>
        <strain>SCHU S4 / Schu 4</strain>
    </source>
</reference>
<evidence type="ECO:0000255" key="1">
    <source>
        <dbReference type="HAMAP-Rule" id="MF_00260"/>
    </source>
</evidence>
<organism>
    <name type="scientific">Francisella tularensis subsp. tularensis (strain SCHU S4 / Schu 4)</name>
    <dbReference type="NCBI Taxonomy" id="177416"/>
    <lineage>
        <taxon>Bacteria</taxon>
        <taxon>Pseudomonadati</taxon>
        <taxon>Pseudomonadota</taxon>
        <taxon>Gammaproteobacteria</taxon>
        <taxon>Thiotrichales</taxon>
        <taxon>Francisellaceae</taxon>
        <taxon>Francisella</taxon>
    </lineage>
</organism>
<protein>
    <recommendedName>
        <fullName evidence="1">Porphobilinogen deaminase</fullName>
        <shortName evidence="1">PBG</shortName>
        <ecNumber evidence="1">2.5.1.61</ecNumber>
    </recommendedName>
    <alternativeName>
        <fullName evidence="1">Hydroxymethylbilane synthase</fullName>
        <shortName evidence="1">HMBS</shortName>
    </alternativeName>
    <alternativeName>
        <fullName evidence="1">Pre-uroporphyrinogen synthase</fullName>
    </alternativeName>
</protein>
<sequence>MKQITIASRESKLALWQTNFVKNRIQLELNIPCEISTMKTQGDIILDQPLNKIGGKALFMKELEVAMLSNKADIAVHSLKDVPYQLPQGFCLAGFMPREDPRDAFVSNKYNSIDDLPKGAVVGTSSLRRKAQLLHYRDDLEIRDLRGNIQTRLSKLDNGDYDAIILASAGLIRLELVERITQFIPVEISLPAVGQGIVVIEALERDNDLLEKIQKLNCRESSRVATAERAFNQELKGGCHVAIGAYAELDNNQITLMAMVASSDGKKILKRKMIGDDPTKLGKLLAQEMIALGAYKILES</sequence>